<accession>Q96ZD6</accession>
<proteinExistence type="inferred from homology"/>
<dbReference type="EMBL" id="BA000023">
    <property type="protein sequence ID" value="BAB66989.1"/>
    <property type="molecule type" value="Genomic_DNA"/>
</dbReference>
<dbReference type="RefSeq" id="WP_010979966.1">
    <property type="nucleotide sequence ID" value="NC_003106.2"/>
</dbReference>
<dbReference type="SMR" id="Q96ZD6"/>
<dbReference type="STRING" id="273063.STK_18950"/>
<dbReference type="KEGG" id="sto:STK_18950"/>
<dbReference type="PATRIC" id="fig|273063.9.peg.2156"/>
<dbReference type="eggNOG" id="arCOG01303">
    <property type="taxonomic scope" value="Archaea"/>
</dbReference>
<dbReference type="OrthoDB" id="9810at2157"/>
<dbReference type="Proteomes" id="UP000001015">
    <property type="component" value="Chromosome"/>
</dbReference>
<dbReference type="GO" id="GO:0005737">
    <property type="term" value="C:cytoplasm"/>
    <property type="evidence" value="ECO:0007669"/>
    <property type="project" value="TreeGrafter"/>
</dbReference>
<dbReference type="GO" id="GO:0005960">
    <property type="term" value="C:glycine cleavage complex"/>
    <property type="evidence" value="ECO:0007669"/>
    <property type="project" value="InterPro"/>
</dbReference>
<dbReference type="GO" id="GO:0019464">
    <property type="term" value="P:glycine decarboxylation via glycine cleavage system"/>
    <property type="evidence" value="ECO:0007669"/>
    <property type="project" value="UniProtKB-UniRule"/>
</dbReference>
<dbReference type="CDD" id="cd06848">
    <property type="entry name" value="GCS_H"/>
    <property type="match status" value="1"/>
</dbReference>
<dbReference type="Gene3D" id="2.40.50.100">
    <property type="match status" value="1"/>
</dbReference>
<dbReference type="HAMAP" id="MF_00272">
    <property type="entry name" value="GcvH"/>
    <property type="match status" value="1"/>
</dbReference>
<dbReference type="InterPro" id="IPR003016">
    <property type="entry name" value="2-oxoA_DH_lipoyl-BS"/>
</dbReference>
<dbReference type="InterPro" id="IPR000089">
    <property type="entry name" value="Biotin_lipoyl"/>
</dbReference>
<dbReference type="InterPro" id="IPR002930">
    <property type="entry name" value="GCV_H"/>
</dbReference>
<dbReference type="InterPro" id="IPR033753">
    <property type="entry name" value="GCV_H/Fam206"/>
</dbReference>
<dbReference type="InterPro" id="IPR011053">
    <property type="entry name" value="Single_hybrid_motif"/>
</dbReference>
<dbReference type="NCBIfam" id="NF002270">
    <property type="entry name" value="PRK01202.1"/>
    <property type="match status" value="1"/>
</dbReference>
<dbReference type="PANTHER" id="PTHR11715">
    <property type="entry name" value="GLYCINE CLEAVAGE SYSTEM H PROTEIN"/>
    <property type="match status" value="1"/>
</dbReference>
<dbReference type="PANTHER" id="PTHR11715:SF3">
    <property type="entry name" value="GLYCINE CLEAVAGE SYSTEM H PROTEIN-RELATED"/>
    <property type="match status" value="1"/>
</dbReference>
<dbReference type="Pfam" id="PF01597">
    <property type="entry name" value="GCV_H"/>
    <property type="match status" value="1"/>
</dbReference>
<dbReference type="SUPFAM" id="SSF51230">
    <property type="entry name" value="Single hybrid motif"/>
    <property type="match status" value="1"/>
</dbReference>
<dbReference type="PROSITE" id="PS50968">
    <property type="entry name" value="BIOTINYL_LIPOYL"/>
    <property type="match status" value="1"/>
</dbReference>
<dbReference type="PROSITE" id="PS00189">
    <property type="entry name" value="LIPOYL"/>
    <property type="match status" value="1"/>
</dbReference>
<comment type="function">
    <text evidence="1">The glycine cleavage system catalyzes the degradation of glycine. The H protein shuttles the methylamine group of glycine from the P protein to the T protein.</text>
</comment>
<comment type="cofactor">
    <cofactor evidence="1">
        <name>(R)-lipoate</name>
        <dbReference type="ChEBI" id="CHEBI:83088"/>
    </cofactor>
    <text evidence="1">Binds 1 lipoyl cofactor covalently.</text>
</comment>
<comment type="subunit">
    <text evidence="1">The glycine cleavage system is composed of four proteins: P, T, L and H.</text>
</comment>
<comment type="similarity">
    <text evidence="1">Belongs to the GcvH family.</text>
</comment>
<organism>
    <name type="scientific">Sulfurisphaera tokodaii (strain DSM 16993 / JCM 10545 / NBRC 100140 / 7)</name>
    <name type="common">Sulfolobus tokodaii</name>
    <dbReference type="NCBI Taxonomy" id="273063"/>
    <lineage>
        <taxon>Archaea</taxon>
        <taxon>Thermoproteota</taxon>
        <taxon>Thermoprotei</taxon>
        <taxon>Sulfolobales</taxon>
        <taxon>Sulfolobaceae</taxon>
        <taxon>Sulfurisphaera</taxon>
    </lineage>
</organism>
<name>GCSH2_SULTO</name>
<evidence type="ECO:0000255" key="1">
    <source>
        <dbReference type="HAMAP-Rule" id="MF_00272"/>
    </source>
</evidence>
<evidence type="ECO:0000255" key="2">
    <source>
        <dbReference type="PROSITE-ProRule" id="PRU01066"/>
    </source>
</evidence>
<sequence length="148" mass="16108">MANVSNCEIPENLLYFIEGKNTVWAKQEAPDVIVVGITDIAQTMAGKVVKVRLKKKGTKVERGKPVATMESGKWAGPVPAPASGEIIDVNPDVEKNPVLVNQDPYGKGWLVKMKVNNPEELKQLVTGSAAVSKLTELINSEKLQCKRL</sequence>
<keyword id="KW-0450">Lipoyl</keyword>
<keyword id="KW-1185">Reference proteome</keyword>
<protein>
    <recommendedName>
        <fullName evidence="1">Probable glycine cleavage system H protein 2</fullName>
    </recommendedName>
</protein>
<gene>
    <name evidence="1" type="primary">gcvH2</name>
    <name type="ordered locus">STK_18950</name>
</gene>
<reference key="1">
    <citation type="journal article" date="2001" name="DNA Res.">
        <title>Complete genome sequence of an aerobic thermoacidophilic Crenarchaeon, Sulfolobus tokodaii strain7.</title>
        <authorList>
            <person name="Kawarabayasi Y."/>
            <person name="Hino Y."/>
            <person name="Horikawa H."/>
            <person name="Jin-no K."/>
            <person name="Takahashi M."/>
            <person name="Sekine M."/>
            <person name="Baba S."/>
            <person name="Ankai A."/>
            <person name="Kosugi H."/>
            <person name="Hosoyama A."/>
            <person name="Fukui S."/>
            <person name="Nagai Y."/>
            <person name="Nishijima K."/>
            <person name="Otsuka R."/>
            <person name="Nakazawa H."/>
            <person name="Takamiya M."/>
            <person name="Kato Y."/>
            <person name="Yoshizawa T."/>
            <person name="Tanaka T."/>
            <person name="Kudoh Y."/>
            <person name="Yamazaki J."/>
            <person name="Kushida N."/>
            <person name="Oguchi A."/>
            <person name="Aoki K."/>
            <person name="Masuda S."/>
            <person name="Yanagii M."/>
            <person name="Nishimura M."/>
            <person name="Yamagishi A."/>
            <person name="Oshima T."/>
            <person name="Kikuchi H."/>
        </authorList>
    </citation>
    <scope>NUCLEOTIDE SEQUENCE [LARGE SCALE GENOMIC DNA]</scope>
    <source>
        <strain>DSM 16993 / JCM 10545 / NBRC 100140 / 7</strain>
    </source>
</reference>
<feature type="chain" id="PRO_0000166286" description="Probable glycine cleavage system H protein 2">
    <location>
        <begin position="1"/>
        <end position="148"/>
    </location>
</feature>
<feature type="domain" description="Lipoyl-binding" evidence="2">
    <location>
        <begin position="32"/>
        <end position="114"/>
    </location>
</feature>
<feature type="modified residue" description="N6-lipoyllysine" evidence="1">
    <location>
        <position position="73"/>
    </location>
</feature>